<organism>
    <name type="scientific">Rickettsia bellii (strain RML369-C)</name>
    <dbReference type="NCBI Taxonomy" id="336407"/>
    <lineage>
        <taxon>Bacteria</taxon>
        <taxon>Pseudomonadati</taxon>
        <taxon>Pseudomonadota</taxon>
        <taxon>Alphaproteobacteria</taxon>
        <taxon>Rickettsiales</taxon>
        <taxon>Rickettsiaceae</taxon>
        <taxon>Rickettsieae</taxon>
        <taxon>Rickettsia</taxon>
        <taxon>belli group</taxon>
    </lineage>
</organism>
<sequence length="255" mass="28899">MRILIILSIILCSLFTKADLEYVDDDIYNYNGSSNINGCREVYDPYEKFNRKIFAFNSVLDYIFLRPLAVGYKNLTNDYMKARVNSFVGNIDMPLTAVNYGLQLNYDKTMKSVWRFIINTTLGIGGLFDVAGKVGLSSDRQTFGNTLAHYGVGPGPYLVLPIIGSTNARDMTDPIFTNYALNPLMYYTHKDFELSVLAVSKINDRYNVLSFSDYVMKNSLDPYATIRSALHQAREASVQYPKNFKCPKPKNVNSN</sequence>
<dbReference type="EMBL" id="CP000087">
    <property type="protein sequence ID" value="ABE05412.1"/>
    <property type="molecule type" value="Genomic_DNA"/>
</dbReference>
<dbReference type="RefSeq" id="WP_011477981.1">
    <property type="nucleotide sequence ID" value="NC_007940.1"/>
</dbReference>
<dbReference type="SMR" id="Q1RGV2"/>
<dbReference type="KEGG" id="rbe:RBE_1331"/>
<dbReference type="eggNOG" id="COG2853">
    <property type="taxonomic scope" value="Bacteria"/>
</dbReference>
<dbReference type="HOGENOM" id="CLU_059326_2_2_5"/>
<dbReference type="OrthoDB" id="9785326at2"/>
<dbReference type="Proteomes" id="UP000001951">
    <property type="component" value="Chromosome"/>
</dbReference>
<dbReference type="GO" id="GO:0016020">
    <property type="term" value="C:membrane"/>
    <property type="evidence" value="ECO:0007669"/>
    <property type="project" value="InterPro"/>
</dbReference>
<dbReference type="GO" id="GO:0120010">
    <property type="term" value="P:intermembrane phospholipid transfer"/>
    <property type="evidence" value="ECO:0007669"/>
    <property type="project" value="TreeGrafter"/>
</dbReference>
<dbReference type="InterPro" id="IPR007428">
    <property type="entry name" value="MlaA"/>
</dbReference>
<dbReference type="PANTHER" id="PTHR30035:SF3">
    <property type="entry name" value="INTERMEMBRANE PHOSPHOLIPID TRANSPORT SYSTEM LIPOPROTEIN MLAA"/>
    <property type="match status" value="1"/>
</dbReference>
<dbReference type="PANTHER" id="PTHR30035">
    <property type="entry name" value="LIPOPROTEIN VACJ-RELATED"/>
    <property type="match status" value="1"/>
</dbReference>
<dbReference type="Pfam" id="PF04333">
    <property type="entry name" value="MlaA"/>
    <property type="match status" value="1"/>
</dbReference>
<dbReference type="PRINTS" id="PR01805">
    <property type="entry name" value="VACJLIPOPROT"/>
</dbReference>
<evidence type="ECO:0000255" key="1"/>
<evidence type="ECO:0000305" key="2"/>
<name>Y1331_RICBR</name>
<proteinExistence type="inferred from homology"/>
<reference key="1">
    <citation type="journal article" date="2006" name="PLoS Genet.">
        <title>Genome sequence of Rickettsia bellii illuminates the role of amoebae in gene exchanges between intracellular pathogens.</title>
        <authorList>
            <person name="Ogata H."/>
            <person name="La Scola B."/>
            <person name="Audic S."/>
            <person name="Renesto P."/>
            <person name="Blanc G."/>
            <person name="Robert C."/>
            <person name="Fournier P.-E."/>
            <person name="Claverie J.-M."/>
            <person name="Raoult D."/>
        </authorList>
    </citation>
    <scope>NUCLEOTIDE SEQUENCE [LARGE SCALE GENOMIC DNA]</scope>
    <source>
        <strain>RML369-C</strain>
    </source>
</reference>
<gene>
    <name type="ordered locus">RBE_1331</name>
</gene>
<comment type="similarity">
    <text evidence="2">Belongs to the MlaA family.</text>
</comment>
<keyword id="KW-0732">Signal</keyword>
<feature type="signal peptide" evidence="1">
    <location>
        <begin position="1"/>
        <end position="18"/>
    </location>
</feature>
<feature type="chain" id="PRO_0000263034" description="Uncharacterized protein RBE_1331">
    <location>
        <begin position="19"/>
        <end position="255"/>
    </location>
</feature>
<accession>Q1RGV2</accession>
<protein>
    <recommendedName>
        <fullName>Uncharacterized protein RBE_1331</fullName>
    </recommendedName>
</protein>